<keyword id="KW-0028">Amino-acid biosynthesis</keyword>
<keyword id="KW-0100">Branched-chain amino acid biosynthesis</keyword>
<keyword id="KW-0460">Magnesium</keyword>
<keyword id="KW-0479">Metal-binding</keyword>
<keyword id="KW-0521">NADP</keyword>
<keyword id="KW-0560">Oxidoreductase</keyword>
<gene>
    <name evidence="1" type="primary">ilvC</name>
    <name type="ordered locus">Paes_0741</name>
</gene>
<protein>
    <recommendedName>
        <fullName evidence="1">Ketol-acid reductoisomerase (NADP(+))</fullName>
        <shortName evidence="1">KARI</shortName>
        <ecNumber evidence="1">1.1.1.86</ecNumber>
    </recommendedName>
    <alternativeName>
        <fullName evidence="1">Acetohydroxy-acid isomeroreductase</fullName>
        <shortName evidence="1">AHIR</shortName>
    </alternativeName>
    <alternativeName>
        <fullName evidence="1">Alpha-keto-beta-hydroxylacyl reductoisomerase</fullName>
    </alternativeName>
    <alternativeName>
        <fullName evidence="1">Ketol-acid reductoisomerase type 1</fullName>
    </alternativeName>
    <alternativeName>
        <fullName evidence="1">Ketol-acid reductoisomerase type I</fullName>
    </alternativeName>
</protein>
<feature type="chain" id="PRO_1000124319" description="Ketol-acid reductoisomerase (NADP(+))">
    <location>
        <begin position="1"/>
        <end position="330"/>
    </location>
</feature>
<feature type="domain" description="KARI N-terminal Rossmann" evidence="2">
    <location>
        <begin position="1"/>
        <end position="181"/>
    </location>
</feature>
<feature type="domain" description="KARI C-terminal knotted" evidence="3">
    <location>
        <begin position="182"/>
        <end position="327"/>
    </location>
</feature>
<feature type="active site" evidence="1">
    <location>
        <position position="107"/>
    </location>
</feature>
<feature type="binding site" evidence="1">
    <location>
        <begin position="24"/>
        <end position="27"/>
    </location>
    <ligand>
        <name>NADP(+)</name>
        <dbReference type="ChEBI" id="CHEBI:58349"/>
    </ligand>
</feature>
<feature type="binding site" evidence="1">
    <location>
        <position position="47"/>
    </location>
    <ligand>
        <name>NADP(+)</name>
        <dbReference type="ChEBI" id="CHEBI:58349"/>
    </ligand>
</feature>
<feature type="binding site" evidence="1">
    <location>
        <position position="50"/>
    </location>
    <ligand>
        <name>NADP(+)</name>
        <dbReference type="ChEBI" id="CHEBI:58349"/>
    </ligand>
</feature>
<feature type="binding site" evidence="1">
    <location>
        <position position="52"/>
    </location>
    <ligand>
        <name>NADP(+)</name>
        <dbReference type="ChEBI" id="CHEBI:58349"/>
    </ligand>
</feature>
<feature type="binding site" evidence="1">
    <location>
        <begin position="82"/>
        <end position="85"/>
    </location>
    <ligand>
        <name>NADP(+)</name>
        <dbReference type="ChEBI" id="CHEBI:58349"/>
    </ligand>
</feature>
<feature type="binding site" evidence="1">
    <location>
        <position position="133"/>
    </location>
    <ligand>
        <name>NADP(+)</name>
        <dbReference type="ChEBI" id="CHEBI:58349"/>
    </ligand>
</feature>
<feature type="binding site" evidence="1">
    <location>
        <position position="190"/>
    </location>
    <ligand>
        <name>Mg(2+)</name>
        <dbReference type="ChEBI" id="CHEBI:18420"/>
        <label>1</label>
    </ligand>
</feature>
<feature type="binding site" evidence="1">
    <location>
        <position position="190"/>
    </location>
    <ligand>
        <name>Mg(2+)</name>
        <dbReference type="ChEBI" id="CHEBI:18420"/>
        <label>2</label>
    </ligand>
</feature>
<feature type="binding site" evidence="1">
    <location>
        <position position="194"/>
    </location>
    <ligand>
        <name>Mg(2+)</name>
        <dbReference type="ChEBI" id="CHEBI:18420"/>
        <label>1</label>
    </ligand>
</feature>
<feature type="binding site" evidence="1">
    <location>
        <position position="226"/>
    </location>
    <ligand>
        <name>Mg(2+)</name>
        <dbReference type="ChEBI" id="CHEBI:18420"/>
        <label>2</label>
    </ligand>
</feature>
<feature type="binding site" evidence="1">
    <location>
        <position position="230"/>
    </location>
    <ligand>
        <name>Mg(2+)</name>
        <dbReference type="ChEBI" id="CHEBI:18420"/>
        <label>2</label>
    </ligand>
</feature>
<feature type="binding site" evidence="1">
    <location>
        <position position="251"/>
    </location>
    <ligand>
        <name>substrate</name>
    </ligand>
</feature>
<proteinExistence type="inferred from homology"/>
<name>ILVC_PROA2</name>
<accession>B4S6N3</accession>
<evidence type="ECO:0000255" key="1">
    <source>
        <dbReference type="HAMAP-Rule" id="MF_00435"/>
    </source>
</evidence>
<evidence type="ECO:0000255" key="2">
    <source>
        <dbReference type="PROSITE-ProRule" id="PRU01197"/>
    </source>
</evidence>
<evidence type="ECO:0000255" key="3">
    <source>
        <dbReference type="PROSITE-ProRule" id="PRU01198"/>
    </source>
</evidence>
<comment type="function">
    <text evidence="1">Involved in the biosynthesis of branched-chain amino acids (BCAA). Catalyzes an alkyl-migration followed by a ketol-acid reduction of (S)-2-acetolactate (S2AL) to yield (R)-2,3-dihydroxy-isovalerate. In the isomerase reaction, S2AL is rearranged via a Mg-dependent methyl migration to produce 3-hydroxy-3-methyl-2-ketobutyrate (HMKB). In the reductase reaction, this 2-ketoacid undergoes a metal-dependent reduction by NADPH to yield (R)-2,3-dihydroxy-isovalerate.</text>
</comment>
<comment type="catalytic activity">
    <reaction evidence="1">
        <text>(2R)-2,3-dihydroxy-3-methylbutanoate + NADP(+) = (2S)-2-acetolactate + NADPH + H(+)</text>
        <dbReference type="Rhea" id="RHEA:22068"/>
        <dbReference type="ChEBI" id="CHEBI:15378"/>
        <dbReference type="ChEBI" id="CHEBI:49072"/>
        <dbReference type="ChEBI" id="CHEBI:57783"/>
        <dbReference type="ChEBI" id="CHEBI:58349"/>
        <dbReference type="ChEBI" id="CHEBI:58476"/>
        <dbReference type="EC" id="1.1.1.86"/>
    </reaction>
</comment>
<comment type="catalytic activity">
    <reaction evidence="1">
        <text>(2R,3R)-2,3-dihydroxy-3-methylpentanoate + NADP(+) = (S)-2-ethyl-2-hydroxy-3-oxobutanoate + NADPH + H(+)</text>
        <dbReference type="Rhea" id="RHEA:13493"/>
        <dbReference type="ChEBI" id="CHEBI:15378"/>
        <dbReference type="ChEBI" id="CHEBI:49256"/>
        <dbReference type="ChEBI" id="CHEBI:49258"/>
        <dbReference type="ChEBI" id="CHEBI:57783"/>
        <dbReference type="ChEBI" id="CHEBI:58349"/>
        <dbReference type="EC" id="1.1.1.86"/>
    </reaction>
</comment>
<comment type="cofactor">
    <cofactor evidence="1">
        <name>Mg(2+)</name>
        <dbReference type="ChEBI" id="CHEBI:18420"/>
    </cofactor>
    <text evidence="1">Binds 2 magnesium ions per subunit.</text>
</comment>
<comment type="pathway">
    <text evidence="1">Amino-acid biosynthesis; L-isoleucine biosynthesis; L-isoleucine from 2-oxobutanoate: step 2/4.</text>
</comment>
<comment type="pathway">
    <text evidence="1">Amino-acid biosynthesis; L-valine biosynthesis; L-valine from pyruvate: step 2/4.</text>
</comment>
<comment type="similarity">
    <text evidence="1">Belongs to the ketol-acid reductoisomerase family.</text>
</comment>
<sequence length="330" mass="36215">MNVYYEQDADLKHLQGKNIAVLGYGSQGHAHALNLKESGLNVCVGLRTDSSSCAKARQAGLEVNTIADAVKWADIIMILLPDQYQKAIYETEIAPNLETGNTLAFAHGFNIHYKQIVPPETVNVIMIAPKSPGHLVRRTFTEGNGVPCLIAVHQDYTGNAKEQALAWAKGLGGAKAGVIETTIKDETETDLFGEQAVLCGGSAELIKAGFETLVEAGYPEELAYFECLHELKLIVDLYYEGGLSRMNYSVSDTAEYGGMTRGPRLITPAVKAEMKKILEEVQDGRFAKEFIDECNSGYKNLTSLRESNTNHPIEKVGAKLRNMMSWLIKK</sequence>
<organism>
    <name type="scientific">Prosthecochloris aestuarii (strain DSM 271 / SK 413)</name>
    <dbReference type="NCBI Taxonomy" id="290512"/>
    <lineage>
        <taxon>Bacteria</taxon>
        <taxon>Pseudomonadati</taxon>
        <taxon>Chlorobiota</taxon>
        <taxon>Chlorobiia</taxon>
        <taxon>Chlorobiales</taxon>
        <taxon>Chlorobiaceae</taxon>
        <taxon>Prosthecochloris</taxon>
    </lineage>
</organism>
<reference key="1">
    <citation type="submission" date="2008-06" db="EMBL/GenBank/DDBJ databases">
        <title>Complete sequence of chromosome of Prosthecochloris aestuarii DSM 271.</title>
        <authorList>
            <consortium name="US DOE Joint Genome Institute"/>
            <person name="Lucas S."/>
            <person name="Copeland A."/>
            <person name="Lapidus A."/>
            <person name="Glavina del Rio T."/>
            <person name="Dalin E."/>
            <person name="Tice H."/>
            <person name="Bruce D."/>
            <person name="Goodwin L."/>
            <person name="Pitluck S."/>
            <person name="Schmutz J."/>
            <person name="Larimer F."/>
            <person name="Land M."/>
            <person name="Hauser L."/>
            <person name="Kyrpides N."/>
            <person name="Anderson I."/>
            <person name="Liu Z."/>
            <person name="Li T."/>
            <person name="Zhao F."/>
            <person name="Overmann J."/>
            <person name="Bryant D.A."/>
            <person name="Richardson P."/>
        </authorList>
    </citation>
    <scope>NUCLEOTIDE SEQUENCE [LARGE SCALE GENOMIC DNA]</scope>
    <source>
        <strain>DSM 271 / SK 413</strain>
    </source>
</reference>
<dbReference type="EC" id="1.1.1.86" evidence="1"/>
<dbReference type="EMBL" id="CP001108">
    <property type="protein sequence ID" value="ACF45788.1"/>
    <property type="molecule type" value="Genomic_DNA"/>
</dbReference>
<dbReference type="RefSeq" id="WP_012505325.1">
    <property type="nucleotide sequence ID" value="NC_011059.1"/>
</dbReference>
<dbReference type="SMR" id="B4S6N3"/>
<dbReference type="STRING" id="290512.Paes_0741"/>
<dbReference type="KEGG" id="paa:Paes_0741"/>
<dbReference type="eggNOG" id="COG0059">
    <property type="taxonomic scope" value="Bacteria"/>
</dbReference>
<dbReference type="HOGENOM" id="CLU_033821_0_1_10"/>
<dbReference type="UniPathway" id="UPA00047">
    <property type="reaction ID" value="UER00056"/>
</dbReference>
<dbReference type="UniPathway" id="UPA00049">
    <property type="reaction ID" value="UER00060"/>
</dbReference>
<dbReference type="Proteomes" id="UP000002725">
    <property type="component" value="Chromosome"/>
</dbReference>
<dbReference type="GO" id="GO:0005829">
    <property type="term" value="C:cytosol"/>
    <property type="evidence" value="ECO:0007669"/>
    <property type="project" value="TreeGrafter"/>
</dbReference>
<dbReference type="GO" id="GO:0004455">
    <property type="term" value="F:ketol-acid reductoisomerase activity"/>
    <property type="evidence" value="ECO:0007669"/>
    <property type="project" value="UniProtKB-UniRule"/>
</dbReference>
<dbReference type="GO" id="GO:0000287">
    <property type="term" value="F:magnesium ion binding"/>
    <property type="evidence" value="ECO:0007669"/>
    <property type="project" value="UniProtKB-UniRule"/>
</dbReference>
<dbReference type="GO" id="GO:0050661">
    <property type="term" value="F:NADP binding"/>
    <property type="evidence" value="ECO:0007669"/>
    <property type="project" value="InterPro"/>
</dbReference>
<dbReference type="GO" id="GO:0009097">
    <property type="term" value="P:isoleucine biosynthetic process"/>
    <property type="evidence" value="ECO:0007669"/>
    <property type="project" value="UniProtKB-UniRule"/>
</dbReference>
<dbReference type="GO" id="GO:0009099">
    <property type="term" value="P:L-valine biosynthetic process"/>
    <property type="evidence" value="ECO:0007669"/>
    <property type="project" value="UniProtKB-UniRule"/>
</dbReference>
<dbReference type="FunFam" id="3.40.50.720:FF:000023">
    <property type="entry name" value="Ketol-acid reductoisomerase (NADP(+))"/>
    <property type="match status" value="1"/>
</dbReference>
<dbReference type="Gene3D" id="6.10.240.10">
    <property type="match status" value="1"/>
</dbReference>
<dbReference type="Gene3D" id="3.40.50.720">
    <property type="entry name" value="NAD(P)-binding Rossmann-like Domain"/>
    <property type="match status" value="1"/>
</dbReference>
<dbReference type="HAMAP" id="MF_00435">
    <property type="entry name" value="IlvC"/>
    <property type="match status" value="1"/>
</dbReference>
<dbReference type="InterPro" id="IPR008927">
    <property type="entry name" value="6-PGluconate_DH-like_C_sf"/>
</dbReference>
<dbReference type="InterPro" id="IPR013023">
    <property type="entry name" value="KARI"/>
</dbReference>
<dbReference type="InterPro" id="IPR000506">
    <property type="entry name" value="KARI_C"/>
</dbReference>
<dbReference type="InterPro" id="IPR013116">
    <property type="entry name" value="KARI_N"/>
</dbReference>
<dbReference type="InterPro" id="IPR014359">
    <property type="entry name" value="KARI_prok"/>
</dbReference>
<dbReference type="InterPro" id="IPR036291">
    <property type="entry name" value="NAD(P)-bd_dom_sf"/>
</dbReference>
<dbReference type="NCBIfam" id="TIGR00465">
    <property type="entry name" value="ilvC"/>
    <property type="match status" value="1"/>
</dbReference>
<dbReference type="NCBIfam" id="NF004017">
    <property type="entry name" value="PRK05479.1"/>
    <property type="match status" value="1"/>
</dbReference>
<dbReference type="NCBIfam" id="NF009940">
    <property type="entry name" value="PRK13403.1"/>
    <property type="match status" value="1"/>
</dbReference>
<dbReference type="PANTHER" id="PTHR21371">
    <property type="entry name" value="KETOL-ACID REDUCTOISOMERASE, MITOCHONDRIAL"/>
    <property type="match status" value="1"/>
</dbReference>
<dbReference type="PANTHER" id="PTHR21371:SF1">
    <property type="entry name" value="KETOL-ACID REDUCTOISOMERASE, MITOCHONDRIAL"/>
    <property type="match status" value="1"/>
</dbReference>
<dbReference type="Pfam" id="PF01450">
    <property type="entry name" value="KARI_C"/>
    <property type="match status" value="1"/>
</dbReference>
<dbReference type="Pfam" id="PF07991">
    <property type="entry name" value="KARI_N"/>
    <property type="match status" value="1"/>
</dbReference>
<dbReference type="PIRSF" id="PIRSF000116">
    <property type="entry name" value="IlvC_gammaproteo"/>
    <property type="match status" value="1"/>
</dbReference>
<dbReference type="SUPFAM" id="SSF48179">
    <property type="entry name" value="6-phosphogluconate dehydrogenase C-terminal domain-like"/>
    <property type="match status" value="1"/>
</dbReference>
<dbReference type="SUPFAM" id="SSF51735">
    <property type="entry name" value="NAD(P)-binding Rossmann-fold domains"/>
    <property type="match status" value="1"/>
</dbReference>
<dbReference type="PROSITE" id="PS51851">
    <property type="entry name" value="KARI_C"/>
    <property type="match status" value="1"/>
</dbReference>
<dbReference type="PROSITE" id="PS51850">
    <property type="entry name" value="KARI_N"/>
    <property type="match status" value="1"/>
</dbReference>